<reference key="1">
    <citation type="journal article" date="2007" name="PLoS Genet.">
        <title>Patterns and implications of gene gain and loss in the evolution of Prochlorococcus.</title>
        <authorList>
            <person name="Kettler G.C."/>
            <person name="Martiny A.C."/>
            <person name="Huang K."/>
            <person name="Zucker J."/>
            <person name="Coleman M.L."/>
            <person name="Rodrigue S."/>
            <person name="Chen F."/>
            <person name="Lapidus A."/>
            <person name="Ferriera S."/>
            <person name="Johnson J."/>
            <person name="Steglich C."/>
            <person name="Church G.M."/>
            <person name="Richardson P."/>
            <person name="Chisholm S.W."/>
        </authorList>
    </citation>
    <scope>NUCLEOTIDE SEQUENCE [LARGE SCALE GENOMIC DNA]</scope>
    <source>
        <strain>MIT 9215</strain>
    </source>
</reference>
<evidence type="ECO:0000255" key="1">
    <source>
        <dbReference type="HAMAP-Rule" id="MF_00685"/>
    </source>
</evidence>
<organism>
    <name type="scientific">Prochlorococcus marinus (strain MIT 9215)</name>
    <dbReference type="NCBI Taxonomy" id="93060"/>
    <lineage>
        <taxon>Bacteria</taxon>
        <taxon>Bacillati</taxon>
        <taxon>Cyanobacteriota</taxon>
        <taxon>Cyanophyceae</taxon>
        <taxon>Synechococcales</taxon>
        <taxon>Prochlorococcaceae</taxon>
        <taxon>Prochlorococcus</taxon>
    </lineage>
</organism>
<dbReference type="EC" id="2.4.1.18" evidence="1"/>
<dbReference type="EMBL" id="CP000825">
    <property type="protein sequence ID" value="ABV50281.1"/>
    <property type="molecule type" value="Genomic_DNA"/>
</dbReference>
<dbReference type="RefSeq" id="WP_012007401.1">
    <property type="nucleotide sequence ID" value="NC_009840.1"/>
</dbReference>
<dbReference type="SMR" id="A8G3V0"/>
<dbReference type="STRING" id="93060.P9215_06661"/>
<dbReference type="CAZy" id="CBM48">
    <property type="family name" value="Carbohydrate-Binding Module Family 48"/>
</dbReference>
<dbReference type="CAZy" id="GH13">
    <property type="family name" value="Glycoside Hydrolase Family 13"/>
</dbReference>
<dbReference type="KEGG" id="pmh:P9215_06661"/>
<dbReference type="eggNOG" id="COG0296">
    <property type="taxonomic scope" value="Bacteria"/>
</dbReference>
<dbReference type="HOGENOM" id="CLU_004245_3_2_3"/>
<dbReference type="OrthoDB" id="9800174at2"/>
<dbReference type="UniPathway" id="UPA00164"/>
<dbReference type="Proteomes" id="UP000002014">
    <property type="component" value="Chromosome"/>
</dbReference>
<dbReference type="GO" id="GO:0005829">
    <property type="term" value="C:cytosol"/>
    <property type="evidence" value="ECO:0007669"/>
    <property type="project" value="TreeGrafter"/>
</dbReference>
<dbReference type="GO" id="GO:0003844">
    <property type="term" value="F:1,4-alpha-glucan branching enzyme activity"/>
    <property type="evidence" value="ECO:0007669"/>
    <property type="project" value="UniProtKB-UniRule"/>
</dbReference>
<dbReference type="GO" id="GO:0043169">
    <property type="term" value="F:cation binding"/>
    <property type="evidence" value="ECO:0007669"/>
    <property type="project" value="InterPro"/>
</dbReference>
<dbReference type="GO" id="GO:0004553">
    <property type="term" value="F:hydrolase activity, hydrolyzing O-glycosyl compounds"/>
    <property type="evidence" value="ECO:0007669"/>
    <property type="project" value="InterPro"/>
</dbReference>
<dbReference type="GO" id="GO:0005978">
    <property type="term" value="P:glycogen biosynthetic process"/>
    <property type="evidence" value="ECO:0007669"/>
    <property type="project" value="UniProtKB-UniRule"/>
</dbReference>
<dbReference type="CDD" id="cd11322">
    <property type="entry name" value="AmyAc_Glg_BE"/>
    <property type="match status" value="1"/>
</dbReference>
<dbReference type="CDD" id="cd02855">
    <property type="entry name" value="E_set_GBE_prok_N"/>
    <property type="match status" value="1"/>
</dbReference>
<dbReference type="FunFam" id="2.60.40.10:FF:000169">
    <property type="entry name" value="1,4-alpha-glucan branching enzyme GlgB"/>
    <property type="match status" value="1"/>
</dbReference>
<dbReference type="FunFam" id="2.60.40.1180:FF:000002">
    <property type="entry name" value="1,4-alpha-glucan branching enzyme GlgB"/>
    <property type="match status" value="1"/>
</dbReference>
<dbReference type="FunFam" id="3.20.20.80:FF:000003">
    <property type="entry name" value="1,4-alpha-glucan branching enzyme GlgB"/>
    <property type="match status" value="1"/>
</dbReference>
<dbReference type="Gene3D" id="3.20.20.80">
    <property type="entry name" value="Glycosidases"/>
    <property type="match status" value="1"/>
</dbReference>
<dbReference type="Gene3D" id="2.60.40.1180">
    <property type="entry name" value="Golgi alpha-mannosidase II"/>
    <property type="match status" value="1"/>
</dbReference>
<dbReference type="Gene3D" id="2.60.40.10">
    <property type="entry name" value="Immunoglobulins"/>
    <property type="match status" value="2"/>
</dbReference>
<dbReference type="HAMAP" id="MF_00685">
    <property type="entry name" value="GlgB"/>
    <property type="match status" value="1"/>
</dbReference>
<dbReference type="InterPro" id="IPR006048">
    <property type="entry name" value="A-amylase/branching_C"/>
</dbReference>
<dbReference type="InterPro" id="IPR037439">
    <property type="entry name" value="Branching_enzy"/>
</dbReference>
<dbReference type="InterPro" id="IPR006407">
    <property type="entry name" value="GlgB"/>
</dbReference>
<dbReference type="InterPro" id="IPR054169">
    <property type="entry name" value="GlgB_N"/>
</dbReference>
<dbReference type="InterPro" id="IPR044143">
    <property type="entry name" value="GlgB_N_E_set_prok"/>
</dbReference>
<dbReference type="InterPro" id="IPR006047">
    <property type="entry name" value="Glyco_hydro_13_cat_dom"/>
</dbReference>
<dbReference type="InterPro" id="IPR004193">
    <property type="entry name" value="Glyco_hydro_13_N"/>
</dbReference>
<dbReference type="InterPro" id="IPR013780">
    <property type="entry name" value="Glyco_hydro_b"/>
</dbReference>
<dbReference type="InterPro" id="IPR017853">
    <property type="entry name" value="Glycoside_hydrolase_SF"/>
</dbReference>
<dbReference type="InterPro" id="IPR013783">
    <property type="entry name" value="Ig-like_fold"/>
</dbReference>
<dbReference type="InterPro" id="IPR014756">
    <property type="entry name" value="Ig_E-set"/>
</dbReference>
<dbReference type="NCBIfam" id="TIGR01515">
    <property type="entry name" value="branching_enzym"/>
    <property type="match status" value="1"/>
</dbReference>
<dbReference type="NCBIfam" id="NF003811">
    <property type="entry name" value="PRK05402.1"/>
    <property type="match status" value="1"/>
</dbReference>
<dbReference type="NCBIfam" id="NF008967">
    <property type="entry name" value="PRK12313.1"/>
    <property type="match status" value="1"/>
</dbReference>
<dbReference type="PANTHER" id="PTHR43651">
    <property type="entry name" value="1,4-ALPHA-GLUCAN-BRANCHING ENZYME"/>
    <property type="match status" value="1"/>
</dbReference>
<dbReference type="PANTHER" id="PTHR43651:SF3">
    <property type="entry name" value="1,4-ALPHA-GLUCAN-BRANCHING ENZYME"/>
    <property type="match status" value="1"/>
</dbReference>
<dbReference type="Pfam" id="PF00128">
    <property type="entry name" value="Alpha-amylase"/>
    <property type="match status" value="2"/>
</dbReference>
<dbReference type="Pfam" id="PF02806">
    <property type="entry name" value="Alpha-amylase_C"/>
    <property type="match status" value="1"/>
</dbReference>
<dbReference type="Pfam" id="PF02922">
    <property type="entry name" value="CBM_48"/>
    <property type="match status" value="1"/>
</dbReference>
<dbReference type="Pfam" id="PF22019">
    <property type="entry name" value="GlgB_N"/>
    <property type="match status" value="1"/>
</dbReference>
<dbReference type="PIRSF" id="PIRSF000463">
    <property type="entry name" value="GlgB"/>
    <property type="match status" value="1"/>
</dbReference>
<dbReference type="SMART" id="SM00642">
    <property type="entry name" value="Aamy"/>
    <property type="match status" value="1"/>
</dbReference>
<dbReference type="SUPFAM" id="SSF51445">
    <property type="entry name" value="(Trans)glycosidases"/>
    <property type="match status" value="1"/>
</dbReference>
<dbReference type="SUPFAM" id="SSF81296">
    <property type="entry name" value="E set domains"/>
    <property type="match status" value="2"/>
</dbReference>
<dbReference type="SUPFAM" id="SSF51011">
    <property type="entry name" value="Glycosyl hydrolase domain"/>
    <property type="match status" value="1"/>
</dbReference>
<keyword id="KW-0119">Carbohydrate metabolism</keyword>
<keyword id="KW-0320">Glycogen biosynthesis</keyword>
<keyword id="KW-0321">Glycogen metabolism</keyword>
<keyword id="KW-0328">Glycosyltransferase</keyword>
<keyword id="KW-0808">Transferase</keyword>
<proteinExistence type="inferred from homology"/>
<accession>A8G3V0</accession>
<protein>
    <recommendedName>
        <fullName evidence="1">1,4-alpha-glucan branching enzyme GlgB</fullName>
        <ecNumber evidence="1">2.4.1.18</ecNumber>
    </recommendedName>
    <alternativeName>
        <fullName evidence="1">1,4-alpha-D-glucan:1,4-alpha-D-glucan 6-glucosyl-transferase</fullName>
    </alternativeName>
    <alternativeName>
        <fullName evidence="1">Alpha-(1-&gt;4)-glucan branching enzyme</fullName>
    </alternativeName>
    <alternativeName>
        <fullName evidence="1">Glycogen branching enzyme</fullName>
        <shortName evidence="1">BE</shortName>
    </alternativeName>
</protein>
<gene>
    <name evidence="1" type="primary">glgB</name>
    <name type="ordered locus">P9215_06661</name>
</gene>
<sequence length="754" mass="88142">MIETIQADWIKSEAINLENCCNDNPLKILGPHFYEEQWVIRVWMPEADEVKINFKNNTYKAESINHKWLFEAILPENPNFNYEINISRGGITHTQHDPWSYREEWMGEVDRHLFAEGNHHHIWEKMGAHLIEEKNQKGVMFCIWAPNAKSISIIGDINSWDGRHHPMQKRLGGIWELFMPTMKEGDTYKYEIRTQQGHIYEKADPYGFLHEIRPQNGSIVSKLKNFNWNDSSWISNRDSSSQINKPISVYEMHLGSWLHESTDNKYLEDNGEPRDPVPAADLKPGTRLLTYPELTEKLIPYVKDRGFTHIELMPISEHPFDGSWGYQVTGWYAPTSRFGTPNEFREFVNKCHEEGIGVILDWVPGHFPKDKHGLAFFDGCHLYEHGDSRIGEHKEWGTLIFNYSRNEVRNFLVANLIYWFEEFHIDGIRVDAVASMLYRDYLRPDGEWIPNENGGNENIEAVKFLQQANHVLFQHFPGALSIAEESTTWPMVTKPTDMGGLGFNLKWNMGWMHDMLDYFEIDPWFRQFHQNSVTFSITYNYTENFMLALSHDEVVHGKSHLLHKMPGDDWKKYANTRALLTYMWTHPGKKTIFMGMEFGQRQEWNVWDDLQWELLEFEPHKGIRNLIDDLNALYKNEAALWKNDFDPYGFQWIDCNDKSNSVISFMRRENDTNEWLVVVANFTPNTHGSYKVGVPVEGFYKEIFNSDGSRYGGSNKGNMGGKETINYNIHDYQNALELALPPLSVSIFKHLSKK</sequence>
<feature type="chain" id="PRO_1000061992" description="1,4-alpha-glucan branching enzyme GlgB">
    <location>
        <begin position="1"/>
        <end position="754"/>
    </location>
</feature>
<feature type="active site" description="Nucleophile" evidence="1">
    <location>
        <position position="431"/>
    </location>
</feature>
<feature type="active site" description="Proton donor" evidence="1">
    <location>
        <position position="484"/>
    </location>
</feature>
<name>GLGB_PROM2</name>
<comment type="function">
    <text evidence="1">Catalyzes the formation of the alpha-1,6-glucosidic linkages in glycogen by scission of a 1,4-alpha-linked oligosaccharide from growing alpha-1,4-glucan chains and the subsequent attachment of the oligosaccharide to the alpha-1,6 position.</text>
</comment>
<comment type="catalytic activity">
    <reaction evidence="1">
        <text>Transfers a segment of a (1-&gt;4)-alpha-D-glucan chain to a primary hydroxy group in a similar glucan chain.</text>
        <dbReference type="EC" id="2.4.1.18"/>
    </reaction>
</comment>
<comment type="pathway">
    <text evidence="1">Glycan biosynthesis; glycogen biosynthesis.</text>
</comment>
<comment type="subunit">
    <text evidence="1">Monomer.</text>
</comment>
<comment type="similarity">
    <text evidence="1">Belongs to the glycosyl hydrolase 13 family. GlgB subfamily.</text>
</comment>